<feature type="chain" id="PRO_1000100378" description="Ribonuclease P protein component">
    <location>
        <begin position="1"/>
        <end position="119"/>
    </location>
</feature>
<accession>B4F0U3</accession>
<evidence type="ECO:0000255" key="1">
    <source>
        <dbReference type="HAMAP-Rule" id="MF_00227"/>
    </source>
</evidence>
<gene>
    <name evidence="1" type="primary">rnpA</name>
    <name type="ordered locus">PMI3130</name>
</gene>
<comment type="function">
    <text evidence="1">RNaseP catalyzes the removal of the 5'-leader sequence from pre-tRNA to produce the mature 5'-terminus. It can also cleave other RNA substrates such as 4.5S RNA. The protein component plays an auxiliary but essential role in vivo by binding to the 5'-leader sequence and broadening the substrate specificity of the ribozyme.</text>
</comment>
<comment type="catalytic activity">
    <reaction evidence="1">
        <text>Endonucleolytic cleavage of RNA, removing 5'-extranucleotides from tRNA precursor.</text>
        <dbReference type="EC" id="3.1.26.5"/>
    </reaction>
</comment>
<comment type="subunit">
    <text evidence="1">Consists of a catalytic RNA component (M1 or rnpB) and a protein subunit.</text>
</comment>
<comment type="similarity">
    <text evidence="1">Belongs to the RnpA family.</text>
</comment>
<name>RNPA_PROMH</name>
<proteinExistence type="inferred from homology"/>
<keyword id="KW-0255">Endonuclease</keyword>
<keyword id="KW-0378">Hydrolase</keyword>
<keyword id="KW-0540">Nuclease</keyword>
<keyword id="KW-1185">Reference proteome</keyword>
<keyword id="KW-0694">RNA-binding</keyword>
<keyword id="KW-0819">tRNA processing</keyword>
<protein>
    <recommendedName>
        <fullName evidence="1">Ribonuclease P protein component</fullName>
        <shortName evidence="1">RNase P protein</shortName>
        <shortName evidence="1">RNaseP protein</shortName>
        <ecNumber evidence="1">3.1.26.5</ecNumber>
    </recommendedName>
    <alternativeName>
        <fullName evidence="1">Protein C5</fullName>
    </alternativeName>
</protein>
<dbReference type="EC" id="3.1.26.5" evidence="1"/>
<dbReference type="EMBL" id="AM942759">
    <property type="protein sequence ID" value="CAR46148.1"/>
    <property type="molecule type" value="Genomic_DNA"/>
</dbReference>
<dbReference type="RefSeq" id="WP_004246510.1">
    <property type="nucleotide sequence ID" value="NC_010554.1"/>
</dbReference>
<dbReference type="SMR" id="B4F0U3"/>
<dbReference type="EnsemblBacteria" id="CAR46148">
    <property type="protein sequence ID" value="CAR46148"/>
    <property type="gene ID" value="PMI3130"/>
</dbReference>
<dbReference type="GeneID" id="6801297"/>
<dbReference type="KEGG" id="pmr:PMI3130"/>
<dbReference type="eggNOG" id="COG0594">
    <property type="taxonomic scope" value="Bacteria"/>
</dbReference>
<dbReference type="HOGENOM" id="CLU_117179_11_0_6"/>
<dbReference type="Proteomes" id="UP000008319">
    <property type="component" value="Chromosome"/>
</dbReference>
<dbReference type="GO" id="GO:0030677">
    <property type="term" value="C:ribonuclease P complex"/>
    <property type="evidence" value="ECO:0007669"/>
    <property type="project" value="TreeGrafter"/>
</dbReference>
<dbReference type="GO" id="GO:0042781">
    <property type="term" value="F:3'-tRNA processing endoribonuclease activity"/>
    <property type="evidence" value="ECO:0007669"/>
    <property type="project" value="TreeGrafter"/>
</dbReference>
<dbReference type="GO" id="GO:0004526">
    <property type="term" value="F:ribonuclease P activity"/>
    <property type="evidence" value="ECO:0007669"/>
    <property type="project" value="UniProtKB-UniRule"/>
</dbReference>
<dbReference type="GO" id="GO:0000049">
    <property type="term" value="F:tRNA binding"/>
    <property type="evidence" value="ECO:0007669"/>
    <property type="project" value="UniProtKB-UniRule"/>
</dbReference>
<dbReference type="GO" id="GO:0001682">
    <property type="term" value="P:tRNA 5'-leader removal"/>
    <property type="evidence" value="ECO:0007669"/>
    <property type="project" value="UniProtKB-UniRule"/>
</dbReference>
<dbReference type="FunFam" id="3.30.230.10:FF:000016">
    <property type="entry name" value="Ribonuclease P protein component"/>
    <property type="match status" value="1"/>
</dbReference>
<dbReference type="Gene3D" id="3.30.230.10">
    <property type="match status" value="1"/>
</dbReference>
<dbReference type="HAMAP" id="MF_00227">
    <property type="entry name" value="RNase_P"/>
    <property type="match status" value="1"/>
</dbReference>
<dbReference type="InterPro" id="IPR020568">
    <property type="entry name" value="Ribosomal_Su5_D2-typ_SF"/>
</dbReference>
<dbReference type="InterPro" id="IPR014721">
    <property type="entry name" value="Ribsml_uS5_D2-typ_fold_subgr"/>
</dbReference>
<dbReference type="InterPro" id="IPR000100">
    <property type="entry name" value="RNase_P"/>
</dbReference>
<dbReference type="InterPro" id="IPR020539">
    <property type="entry name" value="RNase_P_CS"/>
</dbReference>
<dbReference type="NCBIfam" id="TIGR00188">
    <property type="entry name" value="rnpA"/>
    <property type="match status" value="1"/>
</dbReference>
<dbReference type="PANTHER" id="PTHR33992">
    <property type="entry name" value="RIBONUCLEASE P PROTEIN COMPONENT"/>
    <property type="match status" value="1"/>
</dbReference>
<dbReference type="PANTHER" id="PTHR33992:SF1">
    <property type="entry name" value="RIBONUCLEASE P PROTEIN COMPONENT"/>
    <property type="match status" value="1"/>
</dbReference>
<dbReference type="Pfam" id="PF00825">
    <property type="entry name" value="Ribonuclease_P"/>
    <property type="match status" value="1"/>
</dbReference>
<dbReference type="SUPFAM" id="SSF54211">
    <property type="entry name" value="Ribosomal protein S5 domain 2-like"/>
    <property type="match status" value="1"/>
</dbReference>
<dbReference type="PROSITE" id="PS00648">
    <property type="entry name" value="RIBONUCLEASE_P"/>
    <property type="match status" value="1"/>
</dbReference>
<organism>
    <name type="scientific">Proteus mirabilis (strain HI4320)</name>
    <dbReference type="NCBI Taxonomy" id="529507"/>
    <lineage>
        <taxon>Bacteria</taxon>
        <taxon>Pseudomonadati</taxon>
        <taxon>Pseudomonadota</taxon>
        <taxon>Gammaproteobacteria</taxon>
        <taxon>Enterobacterales</taxon>
        <taxon>Morganellaceae</taxon>
        <taxon>Proteus</taxon>
    </lineage>
</organism>
<reference key="1">
    <citation type="journal article" date="2008" name="J. Bacteriol.">
        <title>Complete genome sequence of uropathogenic Proteus mirabilis, a master of both adherence and motility.</title>
        <authorList>
            <person name="Pearson M.M."/>
            <person name="Sebaihia M."/>
            <person name="Churcher C."/>
            <person name="Quail M.A."/>
            <person name="Seshasayee A.S."/>
            <person name="Luscombe N.M."/>
            <person name="Abdellah Z."/>
            <person name="Arrosmith C."/>
            <person name="Atkin B."/>
            <person name="Chillingworth T."/>
            <person name="Hauser H."/>
            <person name="Jagels K."/>
            <person name="Moule S."/>
            <person name="Mungall K."/>
            <person name="Norbertczak H."/>
            <person name="Rabbinowitsch E."/>
            <person name="Walker D."/>
            <person name="Whithead S."/>
            <person name="Thomson N.R."/>
            <person name="Rather P.N."/>
            <person name="Parkhill J."/>
            <person name="Mobley H.L.T."/>
        </authorList>
    </citation>
    <scope>NUCLEOTIDE SEQUENCE [LARGE SCALE GENOMIC DNA]</scope>
    <source>
        <strain>HI4320</strain>
    </source>
</reference>
<sequence length="119" mass="14060">MVKLAFPRELRLLTPKHFNFVFQQPQRASSPEVTILGRQNELGHPRIGLTIAKKNVKRAHERNRIKRLAREYFRLHQHQLPAMDFVVLVRKGVAELDNHQLTEVLGKLWRRHCRLAQKS</sequence>